<organism>
    <name type="scientific">Arabidopsis thaliana</name>
    <name type="common">Mouse-ear cress</name>
    <dbReference type="NCBI Taxonomy" id="3702"/>
    <lineage>
        <taxon>Eukaryota</taxon>
        <taxon>Viridiplantae</taxon>
        <taxon>Streptophyta</taxon>
        <taxon>Embryophyta</taxon>
        <taxon>Tracheophyta</taxon>
        <taxon>Spermatophyta</taxon>
        <taxon>Magnoliopsida</taxon>
        <taxon>eudicotyledons</taxon>
        <taxon>Gunneridae</taxon>
        <taxon>Pentapetalae</taxon>
        <taxon>rosids</taxon>
        <taxon>malvids</taxon>
        <taxon>Brassicales</taxon>
        <taxon>Brassicaceae</taxon>
        <taxon>Camelineae</taxon>
        <taxon>Arabidopsis</taxon>
    </lineage>
</organism>
<accession>Q9LEV7</accession>
<gene>
    <name type="ordered locus">At5g10820</name>
    <name type="ORF">T30N20_90</name>
</gene>
<keyword id="KW-0472">Membrane</keyword>
<keyword id="KW-1185">Reference proteome</keyword>
<keyword id="KW-0812">Transmembrane</keyword>
<keyword id="KW-1133">Transmembrane helix</keyword>
<keyword id="KW-0813">Transport</keyword>
<comment type="function">
    <text evidence="1">Could mediate folate transport.</text>
</comment>
<comment type="subcellular location">
    <subcellularLocation>
        <location evidence="3">Membrane</location>
        <topology evidence="3">Multi-pass membrane protein</topology>
    </subcellularLocation>
</comment>
<comment type="similarity">
    <text evidence="3">Belongs to the major facilitator superfamily. Folate-biopterin transporter (TC 2.A.71) family.</text>
</comment>
<feature type="chain" id="PRO_0000420118" description="Probable folate-biopterin transporter 6">
    <location>
        <begin position="1"/>
        <end position="503"/>
    </location>
</feature>
<feature type="transmembrane region" description="Helical" evidence="2">
    <location>
        <begin position="56"/>
        <end position="76"/>
    </location>
</feature>
<feature type="transmembrane region" description="Helical" evidence="2">
    <location>
        <begin position="101"/>
        <end position="121"/>
    </location>
</feature>
<feature type="transmembrane region" description="Helical" evidence="2">
    <location>
        <begin position="128"/>
        <end position="148"/>
    </location>
</feature>
<feature type="transmembrane region" description="Helical" evidence="2">
    <location>
        <begin position="153"/>
        <end position="173"/>
    </location>
</feature>
<feature type="transmembrane region" description="Helical" evidence="2">
    <location>
        <begin position="194"/>
        <end position="214"/>
    </location>
</feature>
<feature type="transmembrane region" description="Helical" evidence="2">
    <location>
        <begin position="221"/>
        <end position="241"/>
    </location>
</feature>
<feature type="transmembrane region" description="Helical" evidence="2">
    <location>
        <begin position="281"/>
        <end position="301"/>
    </location>
</feature>
<feature type="transmembrane region" description="Helical" evidence="2">
    <location>
        <begin position="314"/>
        <end position="334"/>
    </location>
</feature>
<feature type="transmembrane region" description="Helical" evidence="2">
    <location>
        <begin position="344"/>
        <end position="364"/>
    </location>
</feature>
<feature type="transmembrane region" description="Helical" evidence="2">
    <location>
        <begin position="369"/>
        <end position="389"/>
    </location>
</feature>
<feature type="transmembrane region" description="Helical" evidence="2">
    <location>
        <begin position="404"/>
        <end position="424"/>
    </location>
</feature>
<feature type="transmembrane region" description="Helical" evidence="2">
    <location>
        <begin position="450"/>
        <end position="470"/>
    </location>
</feature>
<reference key="1">
    <citation type="journal article" date="2000" name="Nature">
        <title>Sequence and analysis of chromosome 5 of the plant Arabidopsis thaliana.</title>
        <authorList>
            <person name="Tabata S."/>
            <person name="Kaneko T."/>
            <person name="Nakamura Y."/>
            <person name="Kotani H."/>
            <person name="Kato T."/>
            <person name="Asamizu E."/>
            <person name="Miyajima N."/>
            <person name="Sasamoto S."/>
            <person name="Kimura T."/>
            <person name="Hosouchi T."/>
            <person name="Kawashima K."/>
            <person name="Kohara M."/>
            <person name="Matsumoto M."/>
            <person name="Matsuno A."/>
            <person name="Muraki A."/>
            <person name="Nakayama S."/>
            <person name="Nakazaki N."/>
            <person name="Naruo K."/>
            <person name="Okumura S."/>
            <person name="Shinpo S."/>
            <person name="Takeuchi C."/>
            <person name="Wada T."/>
            <person name="Watanabe A."/>
            <person name="Yamada M."/>
            <person name="Yasuda M."/>
            <person name="Sato S."/>
            <person name="de la Bastide M."/>
            <person name="Huang E."/>
            <person name="Spiegel L."/>
            <person name="Gnoj L."/>
            <person name="O'Shaughnessy A."/>
            <person name="Preston R."/>
            <person name="Habermann K."/>
            <person name="Murray J."/>
            <person name="Johnson D."/>
            <person name="Rohlfing T."/>
            <person name="Nelson J."/>
            <person name="Stoneking T."/>
            <person name="Pepin K."/>
            <person name="Spieth J."/>
            <person name="Sekhon M."/>
            <person name="Armstrong J."/>
            <person name="Becker M."/>
            <person name="Belter E."/>
            <person name="Cordum H."/>
            <person name="Cordes M."/>
            <person name="Courtney L."/>
            <person name="Courtney W."/>
            <person name="Dante M."/>
            <person name="Du H."/>
            <person name="Edwards J."/>
            <person name="Fryman J."/>
            <person name="Haakensen B."/>
            <person name="Lamar E."/>
            <person name="Latreille P."/>
            <person name="Leonard S."/>
            <person name="Meyer R."/>
            <person name="Mulvaney E."/>
            <person name="Ozersky P."/>
            <person name="Riley A."/>
            <person name="Strowmatt C."/>
            <person name="Wagner-McPherson C."/>
            <person name="Wollam A."/>
            <person name="Yoakum M."/>
            <person name="Bell M."/>
            <person name="Dedhia N."/>
            <person name="Parnell L."/>
            <person name="Shah R."/>
            <person name="Rodriguez M."/>
            <person name="Hoon See L."/>
            <person name="Vil D."/>
            <person name="Baker J."/>
            <person name="Kirchoff K."/>
            <person name="Toth K."/>
            <person name="King L."/>
            <person name="Bahret A."/>
            <person name="Miller B."/>
            <person name="Marra M.A."/>
            <person name="Martienssen R."/>
            <person name="McCombie W.R."/>
            <person name="Wilson R.K."/>
            <person name="Murphy G."/>
            <person name="Bancroft I."/>
            <person name="Volckaert G."/>
            <person name="Wambutt R."/>
            <person name="Duesterhoeft A."/>
            <person name="Stiekema W."/>
            <person name="Pohl T."/>
            <person name="Entian K.-D."/>
            <person name="Terryn N."/>
            <person name="Hartley N."/>
            <person name="Bent E."/>
            <person name="Johnson S."/>
            <person name="Langham S.-A."/>
            <person name="McCullagh B."/>
            <person name="Robben J."/>
            <person name="Grymonprez B."/>
            <person name="Zimmermann W."/>
            <person name="Ramsperger U."/>
            <person name="Wedler H."/>
            <person name="Balke K."/>
            <person name="Wedler E."/>
            <person name="Peters S."/>
            <person name="van Staveren M."/>
            <person name="Dirkse W."/>
            <person name="Mooijman P."/>
            <person name="Klein Lankhorst R."/>
            <person name="Weitzenegger T."/>
            <person name="Bothe G."/>
            <person name="Rose M."/>
            <person name="Hauf J."/>
            <person name="Berneiser S."/>
            <person name="Hempel S."/>
            <person name="Feldpausch M."/>
            <person name="Lamberth S."/>
            <person name="Villarroel R."/>
            <person name="Gielen J."/>
            <person name="Ardiles W."/>
            <person name="Bents O."/>
            <person name="Lemcke K."/>
            <person name="Kolesov G."/>
            <person name="Mayer K.F.X."/>
            <person name="Rudd S."/>
            <person name="Schoof H."/>
            <person name="Schueller C."/>
            <person name="Zaccaria P."/>
            <person name="Mewes H.-W."/>
            <person name="Bevan M."/>
            <person name="Fransz P.F."/>
        </authorList>
    </citation>
    <scope>NUCLEOTIDE SEQUENCE [LARGE SCALE GENOMIC DNA]</scope>
    <source>
        <strain>cv. Columbia</strain>
    </source>
</reference>
<reference key="2">
    <citation type="journal article" date="2017" name="Plant J.">
        <title>Araport11: a complete reannotation of the Arabidopsis thaliana reference genome.</title>
        <authorList>
            <person name="Cheng C.Y."/>
            <person name="Krishnakumar V."/>
            <person name="Chan A.P."/>
            <person name="Thibaud-Nissen F."/>
            <person name="Schobel S."/>
            <person name="Town C.D."/>
        </authorList>
    </citation>
    <scope>GENOME REANNOTATION</scope>
    <source>
        <strain>cv. Columbia</strain>
    </source>
</reference>
<reference key="3">
    <citation type="journal article" date="2004" name="Genome Res.">
        <title>Whole genome sequence comparisons and 'full-length' cDNA sequences: a combined approach to evaluate and improve Arabidopsis genome annotation.</title>
        <authorList>
            <person name="Castelli V."/>
            <person name="Aury J.-M."/>
            <person name="Jaillon O."/>
            <person name="Wincker P."/>
            <person name="Clepet C."/>
            <person name="Menard M."/>
            <person name="Cruaud C."/>
            <person name="Quetier F."/>
            <person name="Scarpelli C."/>
            <person name="Schaechter V."/>
            <person name="Temple G."/>
            <person name="Caboche M."/>
            <person name="Weissenbach J."/>
            <person name="Salanoubat M."/>
        </authorList>
    </citation>
    <scope>NUCLEOTIDE SEQUENCE [LARGE SCALE MRNA]</scope>
    <source>
        <strain>cv. Columbia</strain>
    </source>
</reference>
<reference key="4">
    <citation type="journal article" date="2005" name="J. Biol. Chem.">
        <title>Higher plant plastids and cyanobacteria have folate carriers related to those of trypanosomatids.</title>
        <authorList>
            <person name="Klaus S.M."/>
            <person name="Kunji E.R."/>
            <person name="Bozzo G.G."/>
            <person name="Noiriel A."/>
            <person name="de la Garza R.D."/>
            <person name="Basset G.J."/>
            <person name="Ravanel S."/>
            <person name="Rebeille F."/>
            <person name="Gregory J.F. III"/>
            <person name="Hanson A.D."/>
        </authorList>
    </citation>
    <scope>GENE FAMILY</scope>
</reference>
<evidence type="ECO:0000250" key="1"/>
<evidence type="ECO:0000255" key="2"/>
<evidence type="ECO:0000305" key="3"/>
<sequence length="503" mass="55814">METLETEKFFSDDKPLLKPISDHSEIKTKARRNAVVSVLIQPFQWLQMLSSRLNLSFVLGVVLVYGVNQGFSGSIFKVVTDYYWKDVQQVQPSVVQLYMGLYYIPWVMRPIWGLFTDVFPIKGYKRKPYFVVSGVLGLVSAIAIVVLGKLPAALALSCLLGVSAAMAIADVVIDACIATNSINIRSLAPDIQSLCMVCSSAGALVGYATSGVFVHQLGPQGALGVLAFSPATIVILGFFIYEKRSSTVPTQKTKKDTDGLGVAVKGMCKTVKYPEVWKPSLYMFISLALNISTHEGHFYWYTDPTAGPAFSQEFVGIIYAVGALASMFGVLIYHKKLKGYSFRNILFFAQLLYVFSGMLDLVFIKRWNLTLGIPDSLFVITEESFTKMISKIRWIPMVVLSTRLCPLGIEGTFFAFLMCIDSFGQLASKWGGGFVLHAFGVTRHDFGNLWLVILIRNILRLVTVCFVFLVPDSDHLDDLVPSDVLPKKQSEDDDDDDIKLLLL</sequence>
<protein>
    <recommendedName>
        <fullName>Probable folate-biopterin transporter 6</fullName>
    </recommendedName>
</protein>
<dbReference type="EMBL" id="AL365234">
    <property type="protein sequence ID" value="CAB96837.1"/>
    <property type="molecule type" value="Genomic_DNA"/>
</dbReference>
<dbReference type="EMBL" id="CP002688">
    <property type="protein sequence ID" value="AED91600.1"/>
    <property type="molecule type" value="Genomic_DNA"/>
</dbReference>
<dbReference type="EMBL" id="BX830317">
    <property type="status" value="NOT_ANNOTATED_CDS"/>
    <property type="molecule type" value="mRNA"/>
</dbReference>
<dbReference type="PIR" id="T50791">
    <property type="entry name" value="T50791"/>
</dbReference>
<dbReference type="RefSeq" id="NP_196643.1">
    <property type="nucleotide sequence ID" value="NM_121120.4"/>
</dbReference>
<dbReference type="SMR" id="Q9LEV7"/>
<dbReference type="BioGRID" id="16227">
    <property type="interactions" value="1"/>
</dbReference>
<dbReference type="FunCoup" id="Q9LEV7">
    <property type="interactions" value="58"/>
</dbReference>
<dbReference type="IntAct" id="Q9LEV7">
    <property type="interactions" value="1"/>
</dbReference>
<dbReference type="iPTMnet" id="Q9LEV7"/>
<dbReference type="PaxDb" id="3702-AT5G10820.1"/>
<dbReference type="ProteomicsDB" id="222436"/>
<dbReference type="EnsemblPlants" id="AT5G10820.1">
    <property type="protein sequence ID" value="AT5G10820.1"/>
    <property type="gene ID" value="AT5G10820"/>
</dbReference>
<dbReference type="GeneID" id="830949"/>
<dbReference type="Gramene" id="AT5G10820.1">
    <property type="protein sequence ID" value="AT5G10820.1"/>
    <property type="gene ID" value="AT5G10820"/>
</dbReference>
<dbReference type="KEGG" id="ath:AT5G10820"/>
<dbReference type="Araport" id="AT5G10820"/>
<dbReference type="TAIR" id="AT5G10820"/>
<dbReference type="eggNOG" id="ENOG502QUG7">
    <property type="taxonomic scope" value="Eukaryota"/>
</dbReference>
<dbReference type="HOGENOM" id="CLU_018563_1_1_1"/>
<dbReference type="InParanoid" id="Q9LEV7"/>
<dbReference type="OMA" id="FVIMEEC"/>
<dbReference type="PhylomeDB" id="Q9LEV7"/>
<dbReference type="PRO" id="PR:Q9LEV7"/>
<dbReference type="Proteomes" id="UP000006548">
    <property type="component" value="Chromosome 5"/>
</dbReference>
<dbReference type="ExpressionAtlas" id="Q9LEV7">
    <property type="expression patterns" value="baseline and differential"/>
</dbReference>
<dbReference type="GO" id="GO:0016020">
    <property type="term" value="C:membrane"/>
    <property type="evidence" value="ECO:0007669"/>
    <property type="project" value="UniProtKB-SubCell"/>
</dbReference>
<dbReference type="CDD" id="cd17484">
    <property type="entry name" value="MFS_FBT"/>
    <property type="match status" value="1"/>
</dbReference>
<dbReference type="Gene3D" id="1.20.1250.20">
    <property type="entry name" value="MFS general substrate transporter like domains"/>
    <property type="match status" value="1"/>
</dbReference>
<dbReference type="InterPro" id="IPR039309">
    <property type="entry name" value="BT1"/>
</dbReference>
<dbReference type="InterPro" id="IPR004324">
    <property type="entry name" value="FBT"/>
</dbReference>
<dbReference type="InterPro" id="IPR036259">
    <property type="entry name" value="MFS_trans_sf"/>
</dbReference>
<dbReference type="NCBIfam" id="TIGR00788">
    <property type="entry name" value="fbt"/>
    <property type="match status" value="1"/>
</dbReference>
<dbReference type="PANTHER" id="PTHR31585">
    <property type="entry name" value="FOLATE-BIOPTERIN TRANSPORTER 1, CHLOROPLASTIC"/>
    <property type="match status" value="1"/>
</dbReference>
<dbReference type="PANTHER" id="PTHR31585:SF44">
    <property type="entry name" value="FOLATE-BIOPTERIN TRANSPORTER 6-RELATED"/>
    <property type="match status" value="1"/>
</dbReference>
<dbReference type="Pfam" id="PF03092">
    <property type="entry name" value="BT1"/>
    <property type="match status" value="1"/>
</dbReference>
<dbReference type="SUPFAM" id="SSF103473">
    <property type="entry name" value="MFS general substrate transporter"/>
    <property type="match status" value="1"/>
</dbReference>
<proteinExistence type="evidence at transcript level"/>
<name>FBT6_ARATH</name>